<protein>
    <recommendedName>
        <fullName>FAS1 domain-containing protein mug57</fullName>
    </recommendedName>
    <alternativeName>
        <fullName>Meiotically up-regulated gene 57 protein</fullName>
    </alternativeName>
</protein>
<dbReference type="EMBL" id="CU329671">
    <property type="protein sequence ID" value="CAB46763.2"/>
    <property type="molecule type" value="Genomic_DNA"/>
</dbReference>
<dbReference type="EMBL" id="AB027857">
    <property type="protein sequence ID" value="BAA87161.1"/>
    <property type="status" value="ALT_SEQ"/>
    <property type="molecule type" value="Genomic_DNA"/>
</dbReference>
<dbReference type="PIR" id="T39424">
    <property type="entry name" value="T39424"/>
</dbReference>
<dbReference type="RefSeq" id="NP_595399.2">
    <property type="nucleotide sequence ID" value="NM_001021306.2"/>
</dbReference>
<dbReference type="SMR" id="Q9Y801"/>
<dbReference type="BioGRID" id="276632">
    <property type="interactions" value="10"/>
</dbReference>
<dbReference type="STRING" id="284812.Q9Y801"/>
<dbReference type="iPTMnet" id="Q9Y801"/>
<dbReference type="PaxDb" id="4896-SPBC146.10.1"/>
<dbReference type="EnsemblFungi" id="SPBC146.10.1">
    <property type="protein sequence ID" value="SPBC146.10.1:pep"/>
    <property type="gene ID" value="SPBC146.10"/>
</dbReference>
<dbReference type="GeneID" id="2540094"/>
<dbReference type="KEGG" id="spo:2540094"/>
<dbReference type="PomBase" id="SPBC146.10">
    <property type="gene designation" value="mug57"/>
</dbReference>
<dbReference type="VEuPathDB" id="FungiDB:SPBC146.10"/>
<dbReference type="HOGENOM" id="CLU_1428769_0_0_1"/>
<dbReference type="InParanoid" id="Q9Y801"/>
<dbReference type="OMA" id="GEMWILN"/>
<dbReference type="PhylomeDB" id="Q9Y801"/>
<dbReference type="PRO" id="PR:Q9Y801"/>
<dbReference type="Proteomes" id="UP000002485">
    <property type="component" value="Chromosome II"/>
</dbReference>
<dbReference type="GO" id="GO:0009986">
    <property type="term" value="C:cell surface"/>
    <property type="evidence" value="ECO:0000255"/>
    <property type="project" value="PomBase"/>
</dbReference>
<dbReference type="GO" id="GO:0005829">
    <property type="term" value="C:cytosol"/>
    <property type="evidence" value="ECO:0007005"/>
    <property type="project" value="PomBase"/>
</dbReference>
<dbReference type="GO" id="GO:0016020">
    <property type="term" value="C:membrane"/>
    <property type="evidence" value="ECO:0007669"/>
    <property type="project" value="UniProtKB-SubCell"/>
</dbReference>
<dbReference type="GO" id="GO:0005634">
    <property type="term" value="C:nucleus"/>
    <property type="evidence" value="ECO:0007005"/>
    <property type="project" value="PomBase"/>
</dbReference>
<dbReference type="GO" id="GO:0030435">
    <property type="term" value="P:sporulation resulting in formation of a cellular spore"/>
    <property type="evidence" value="ECO:0007669"/>
    <property type="project" value="UniProtKB-KW"/>
</dbReference>
<dbReference type="Gene3D" id="2.30.180.10">
    <property type="entry name" value="FAS1 domain"/>
    <property type="match status" value="1"/>
</dbReference>
<dbReference type="InterPro" id="IPR036378">
    <property type="entry name" value="FAS1_dom_sf"/>
</dbReference>
<dbReference type="InterPro" id="IPR000782">
    <property type="entry name" value="FAS1_domain"/>
</dbReference>
<dbReference type="InterPro" id="IPR040200">
    <property type="entry name" value="Mug57-like"/>
</dbReference>
<dbReference type="PANTHER" id="PTHR28156">
    <property type="entry name" value="FAS1 DOMAIN-CONTAINING PROTEIN YDR262W"/>
    <property type="match status" value="1"/>
</dbReference>
<dbReference type="PANTHER" id="PTHR28156:SF1">
    <property type="entry name" value="FAS1 DOMAIN-CONTAINING PROTEIN YDR262W"/>
    <property type="match status" value="1"/>
</dbReference>
<dbReference type="Pfam" id="PF02469">
    <property type="entry name" value="Fasciclin"/>
    <property type="match status" value="1"/>
</dbReference>
<dbReference type="SUPFAM" id="SSF82153">
    <property type="entry name" value="FAS1 domain"/>
    <property type="match status" value="1"/>
</dbReference>
<dbReference type="PROSITE" id="PS50213">
    <property type="entry name" value="FAS1"/>
    <property type="match status" value="1"/>
</dbReference>
<keyword id="KW-0963">Cytoplasm</keyword>
<keyword id="KW-0472">Membrane</keyword>
<keyword id="KW-0539">Nucleus</keyword>
<keyword id="KW-1185">Reference proteome</keyword>
<keyword id="KW-0732">Signal</keyword>
<keyword id="KW-0749">Sporulation</keyword>
<reference key="1">
    <citation type="journal article" date="2002" name="Nature">
        <title>The genome sequence of Schizosaccharomyces pombe.</title>
        <authorList>
            <person name="Wood V."/>
            <person name="Gwilliam R."/>
            <person name="Rajandream M.A."/>
            <person name="Lyne M.H."/>
            <person name="Lyne R."/>
            <person name="Stewart A."/>
            <person name="Sgouros J.G."/>
            <person name="Peat N."/>
            <person name="Hayles J."/>
            <person name="Baker S.G."/>
            <person name="Basham D."/>
            <person name="Bowman S."/>
            <person name="Brooks K."/>
            <person name="Brown D."/>
            <person name="Brown S."/>
            <person name="Chillingworth T."/>
            <person name="Churcher C.M."/>
            <person name="Collins M."/>
            <person name="Connor R."/>
            <person name="Cronin A."/>
            <person name="Davis P."/>
            <person name="Feltwell T."/>
            <person name="Fraser A."/>
            <person name="Gentles S."/>
            <person name="Goble A."/>
            <person name="Hamlin N."/>
            <person name="Harris D.E."/>
            <person name="Hidalgo J."/>
            <person name="Hodgson G."/>
            <person name="Holroyd S."/>
            <person name="Hornsby T."/>
            <person name="Howarth S."/>
            <person name="Huckle E.J."/>
            <person name="Hunt S."/>
            <person name="Jagels K."/>
            <person name="James K.D."/>
            <person name="Jones L."/>
            <person name="Jones M."/>
            <person name="Leather S."/>
            <person name="McDonald S."/>
            <person name="McLean J."/>
            <person name="Mooney P."/>
            <person name="Moule S."/>
            <person name="Mungall K.L."/>
            <person name="Murphy L.D."/>
            <person name="Niblett D."/>
            <person name="Odell C."/>
            <person name="Oliver K."/>
            <person name="O'Neil S."/>
            <person name="Pearson D."/>
            <person name="Quail M.A."/>
            <person name="Rabbinowitsch E."/>
            <person name="Rutherford K.M."/>
            <person name="Rutter S."/>
            <person name="Saunders D."/>
            <person name="Seeger K."/>
            <person name="Sharp S."/>
            <person name="Skelton J."/>
            <person name="Simmonds M.N."/>
            <person name="Squares R."/>
            <person name="Squares S."/>
            <person name="Stevens K."/>
            <person name="Taylor K."/>
            <person name="Taylor R.G."/>
            <person name="Tivey A."/>
            <person name="Walsh S.V."/>
            <person name="Warren T."/>
            <person name="Whitehead S."/>
            <person name="Woodward J.R."/>
            <person name="Volckaert G."/>
            <person name="Aert R."/>
            <person name="Robben J."/>
            <person name="Grymonprez B."/>
            <person name="Weltjens I."/>
            <person name="Vanstreels E."/>
            <person name="Rieger M."/>
            <person name="Schaefer M."/>
            <person name="Mueller-Auer S."/>
            <person name="Gabel C."/>
            <person name="Fuchs M."/>
            <person name="Duesterhoeft A."/>
            <person name="Fritzc C."/>
            <person name="Holzer E."/>
            <person name="Moestl D."/>
            <person name="Hilbert H."/>
            <person name="Borzym K."/>
            <person name="Langer I."/>
            <person name="Beck A."/>
            <person name="Lehrach H."/>
            <person name="Reinhardt R."/>
            <person name="Pohl T.M."/>
            <person name="Eger P."/>
            <person name="Zimmermann W."/>
            <person name="Wedler H."/>
            <person name="Wambutt R."/>
            <person name="Purnelle B."/>
            <person name="Goffeau A."/>
            <person name="Cadieu E."/>
            <person name="Dreano S."/>
            <person name="Gloux S."/>
            <person name="Lelaure V."/>
            <person name="Mottier S."/>
            <person name="Galibert F."/>
            <person name="Aves S.J."/>
            <person name="Xiang Z."/>
            <person name="Hunt C."/>
            <person name="Moore K."/>
            <person name="Hurst S.M."/>
            <person name="Lucas M."/>
            <person name="Rochet M."/>
            <person name="Gaillardin C."/>
            <person name="Tallada V.A."/>
            <person name="Garzon A."/>
            <person name="Thode G."/>
            <person name="Daga R.R."/>
            <person name="Cruzado L."/>
            <person name="Jimenez J."/>
            <person name="Sanchez M."/>
            <person name="del Rey F."/>
            <person name="Benito J."/>
            <person name="Dominguez A."/>
            <person name="Revuelta J.L."/>
            <person name="Moreno S."/>
            <person name="Armstrong J."/>
            <person name="Forsburg S.L."/>
            <person name="Cerutti L."/>
            <person name="Lowe T."/>
            <person name="McCombie W.R."/>
            <person name="Paulsen I."/>
            <person name="Potashkin J."/>
            <person name="Shpakovski G.V."/>
            <person name="Ussery D."/>
            <person name="Barrell B.G."/>
            <person name="Nurse P."/>
        </authorList>
    </citation>
    <scope>NUCLEOTIDE SEQUENCE [LARGE SCALE GENOMIC DNA]</scope>
    <source>
        <strain>972 / ATCC 24843</strain>
    </source>
</reference>
<reference key="2">
    <citation type="journal article" date="2000" name="Genes Cells">
        <title>Large-scale screening of intracellular protein localization in living fission yeast cells by the use of a GFP-fusion genomic DNA library.</title>
        <authorList>
            <person name="Ding D.-Q."/>
            <person name="Tomita Y."/>
            <person name="Yamamoto A."/>
            <person name="Chikashige Y."/>
            <person name="Haraguchi T."/>
            <person name="Hiraoka Y."/>
        </authorList>
    </citation>
    <scope>NUCLEOTIDE SEQUENCE [LARGE SCALE GENOMIC DNA] OF 1-156</scope>
    <scope>SUBCELLULAR LOCATION</scope>
    <source>
        <strain>ATCC 38364 / 968</strain>
    </source>
</reference>
<reference key="3">
    <citation type="journal article" date="2005" name="Curr. Biol.">
        <title>A large-scale screen in S. pombe identifies seven novel genes required for critical meiotic events.</title>
        <authorList>
            <person name="Martin-Castellanos C."/>
            <person name="Blanco M."/>
            <person name="Rozalen A.E."/>
            <person name="Perez-Hidalgo L."/>
            <person name="Garcia A.I."/>
            <person name="Conde F."/>
            <person name="Mata J."/>
            <person name="Ellermeier C."/>
            <person name="Davis L."/>
            <person name="San-Segundo P."/>
            <person name="Smith G.R."/>
            <person name="Moreno S."/>
        </authorList>
    </citation>
    <scope>FUNCTION IN SPORULATION</scope>
</reference>
<reference key="4">
    <citation type="journal article" date="2006" name="Nat. Biotechnol.">
        <title>ORFeome cloning and global analysis of protein localization in the fission yeast Schizosaccharomyces pombe.</title>
        <authorList>
            <person name="Matsuyama A."/>
            <person name="Arai R."/>
            <person name="Yashiroda Y."/>
            <person name="Shirai A."/>
            <person name="Kamata A."/>
            <person name="Sekido S."/>
            <person name="Kobayashi Y."/>
            <person name="Hashimoto A."/>
            <person name="Hamamoto M."/>
            <person name="Hiraoka Y."/>
            <person name="Horinouchi S."/>
            <person name="Yoshida M."/>
        </authorList>
    </citation>
    <scope>SUBCELLULAR LOCATION [LARGE SCALE ANALYSIS]</scope>
</reference>
<accession>Q9Y801</accession>
<accession>Q9UU25</accession>
<organism>
    <name type="scientific">Schizosaccharomyces pombe (strain 972 / ATCC 24843)</name>
    <name type="common">Fission yeast</name>
    <dbReference type="NCBI Taxonomy" id="284812"/>
    <lineage>
        <taxon>Eukaryota</taxon>
        <taxon>Fungi</taxon>
        <taxon>Dikarya</taxon>
        <taxon>Ascomycota</taxon>
        <taxon>Taphrinomycotina</taxon>
        <taxon>Schizosaccharomycetes</taxon>
        <taxon>Schizosaccharomycetales</taxon>
        <taxon>Schizosaccharomycetaceae</taxon>
        <taxon>Schizosaccharomyces</taxon>
    </lineage>
</organism>
<evidence type="ECO:0000255" key="1"/>
<evidence type="ECO:0000255" key="2">
    <source>
        <dbReference type="PROSITE-ProRule" id="PRU00082"/>
    </source>
</evidence>
<evidence type="ECO:0000269" key="3">
    <source>
    </source>
</evidence>
<gene>
    <name type="primary">mug57</name>
    <name type="ORF">SPBC146.10</name>
</gene>
<comment type="function">
    <text evidence="3">Has a role in sporulation.</text>
</comment>
<comment type="subcellular location">
    <subcellularLocation>
        <location>Cytoplasm</location>
    </subcellularLocation>
    <subcellularLocation>
        <location>Nucleus</location>
    </subcellularLocation>
    <subcellularLocation>
        <location>Membrane</location>
        <topology>Peripheral membrane protein</topology>
    </subcellularLocation>
    <text>Membrane-associated.</text>
</comment>
<name>YFAS1_SCHPO</name>
<proteinExistence type="evidence at protein level"/>
<sequence length="189" mass="22138">MMKLFCLNIFRFLYTTSFISAVLSFNQRPINMQEVREPRLFELLAETRDCNIFSELIMQFPDYVHLFQQKDQHITVLVPNDAAFQQCKVKPWAIEYKNGVAVKSTDIVHITEQQAQDNILKFVERHIITSSPIEWNNEYKTIDGTDVHVIKKEEEIYINESIHVLCRKKASNGEMWVLNATLSTPSIRE</sequence>
<feature type="signal peptide" evidence="1">
    <location>
        <begin position="1"/>
        <end position="24"/>
    </location>
</feature>
<feature type="chain" id="PRO_0000008799" description="FAS1 domain-containing protein mug57">
    <location>
        <begin position="25"/>
        <end position="189"/>
    </location>
</feature>
<feature type="domain" description="FAS1" evidence="2">
    <location>
        <begin position="37"/>
        <end position="182"/>
    </location>
</feature>